<reference key="1">
    <citation type="journal article" date="1991" name="Agric. Biol. Chem.">
        <title>Amino acid sequences of the two smallest trypsin inhibitors from sponge gourd seeds.</title>
        <authorList>
            <person name="Hatakeyama T."/>
            <person name="Hiraoka M."/>
            <person name="Funatsu G."/>
        </authorList>
    </citation>
    <scope>PROTEIN SEQUENCE</scope>
    <source>
        <tissue>Seed</tissue>
    </source>
</reference>
<evidence type="ECO:0000250" key="1"/>
<evidence type="ECO:0000305" key="2"/>
<accession>P25849</accession>
<comment type="function">
    <text>Inhibits trypsin.</text>
</comment>
<comment type="subcellular location">
    <subcellularLocation>
        <location>Secreted</location>
    </subcellularLocation>
</comment>
<comment type="domain">
    <text evidence="1">The presence of a 'disulfide through disulfide knot' structurally defines this protein as a knottin.</text>
</comment>
<comment type="similarity">
    <text evidence="2">Belongs to the protease inhibitor I7 (squash-type serine protease inhibitor) family.</text>
</comment>
<proteinExistence type="evidence at protein level"/>
<dbReference type="PIR" id="JU0211">
    <property type="entry name" value="JU0211"/>
</dbReference>
<dbReference type="SMR" id="P25849"/>
<dbReference type="MEROPS" id="I07.012"/>
<dbReference type="GO" id="GO:0005576">
    <property type="term" value="C:extracellular region"/>
    <property type="evidence" value="ECO:0007669"/>
    <property type="project" value="UniProtKB-SubCell"/>
</dbReference>
<dbReference type="GO" id="GO:0004867">
    <property type="term" value="F:serine-type endopeptidase inhibitor activity"/>
    <property type="evidence" value="ECO:0007669"/>
    <property type="project" value="UniProtKB-KW"/>
</dbReference>
<dbReference type="CDD" id="cd00150">
    <property type="entry name" value="PlantTI"/>
    <property type="match status" value="1"/>
</dbReference>
<dbReference type="Gene3D" id="4.10.75.20">
    <property type="match status" value="1"/>
</dbReference>
<dbReference type="InterPro" id="IPR000737">
    <property type="entry name" value="Prot_inh_squash"/>
</dbReference>
<dbReference type="InterPro" id="IPR011052">
    <property type="entry name" value="Proteinase_amylase_inhib_sf"/>
</dbReference>
<dbReference type="Pfam" id="PF00299">
    <property type="entry name" value="Squash"/>
    <property type="match status" value="1"/>
</dbReference>
<dbReference type="PRINTS" id="PR00293">
    <property type="entry name" value="SQUASHINHBTR"/>
</dbReference>
<dbReference type="SMART" id="SM00286">
    <property type="entry name" value="PTI"/>
    <property type="match status" value="1"/>
</dbReference>
<dbReference type="SUPFAM" id="SSF57027">
    <property type="entry name" value="Plant inhibitors of proteinases and amylases"/>
    <property type="match status" value="1"/>
</dbReference>
<dbReference type="PROSITE" id="PS00286">
    <property type="entry name" value="SQUASH_INHIBITOR"/>
    <property type="match status" value="1"/>
</dbReference>
<sequence>RICPRILMECSSDSDCLAECICLEQGFCG</sequence>
<name>ITR1_LUFAE</name>
<keyword id="KW-0903">Direct protein sequencing</keyword>
<keyword id="KW-1015">Disulfide bond</keyword>
<keyword id="KW-0960">Knottin</keyword>
<keyword id="KW-0646">Protease inhibitor</keyword>
<keyword id="KW-0964">Secreted</keyword>
<keyword id="KW-0722">Serine protease inhibitor</keyword>
<organism>
    <name type="scientific">Luffa aegyptiaca</name>
    <name type="common">Sponge gourd</name>
    <name type="synonym">Luffa cylindrica</name>
    <dbReference type="NCBI Taxonomy" id="3670"/>
    <lineage>
        <taxon>Eukaryota</taxon>
        <taxon>Viridiplantae</taxon>
        <taxon>Streptophyta</taxon>
        <taxon>Embryophyta</taxon>
        <taxon>Tracheophyta</taxon>
        <taxon>Spermatophyta</taxon>
        <taxon>Magnoliopsida</taxon>
        <taxon>eudicotyledons</taxon>
        <taxon>Gunneridae</taxon>
        <taxon>Pentapetalae</taxon>
        <taxon>rosids</taxon>
        <taxon>fabids</taxon>
        <taxon>Cucurbitales</taxon>
        <taxon>Cucurbitaceae</taxon>
        <taxon>Sicyoeae</taxon>
        <taxon>Luffa</taxon>
    </lineage>
</organism>
<protein>
    <recommendedName>
        <fullName>Trypsin inhibitor 1</fullName>
    </recommendedName>
    <alternativeName>
        <fullName>LCTI-I</fullName>
    </alternativeName>
    <alternativeName>
        <fullName>Trypsin inhibitor I</fullName>
    </alternativeName>
</protein>
<feature type="peptide" id="PRO_0000044382" description="Trypsin inhibitor 1">
    <location>
        <begin position="1"/>
        <end position="29"/>
    </location>
</feature>
<feature type="site" description="Reactive bond">
    <location>
        <begin position="5"/>
        <end position="6"/>
    </location>
</feature>
<feature type="disulfide bond" evidence="1">
    <location>
        <begin position="3"/>
        <end position="20"/>
    </location>
</feature>
<feature type="disulfide bond" evidence="1">
    <location>
        <begin position="10"/>
        <end position="22"/>
    </location>
</feature>
<feature type="disulfide bond" evidence="1">
    <location>
        <begin position="16"/>
        <end position="28"/>
    </location>
</feature>